<proteinExistence type="evidence at protein level"/>
<keyword id="KW-0002">3D-structure</keyword>
<keyword id="KW-0025">Alternative splicing</keyword>
<keyword id="KW-0131">Cell cycle</keyword>
<keyword id="KW-0132">Cell division</keyword>
<keyword id="KW-0195">Cyclin</keyword>
<keyword id="KW-0225">Disease variant</keyword>
<keyword id="KW-0945">Host-virus interaction</keyword>
<keyword id="KW-0991">Intellectual disability</keyword>
<keyword id="KW-0498">Mitosis</keyword>
<keyword id="KW-0539">Nucleus</keyword>
<keyword id="KW-0597">Phosphoprotein</keyword>
<keyword id="KW-1267">Proteomics identification</keyword>
<keyword id="KW-1185">Reference proteome</keyword>
<keyword id="KW-0804">Transcription</keyword>
<keyword id="KW-0805">Transcription regulation</keyword>
<comment type="function">
    <text evidence="3 4 8">Regulatory subunit of cyclin-dependent kinases that mediates activation of target kinases. Plays a role in transcriptional regulation via its role in regulating the phosphorylation of the C-terminal domain (CTD) of the large subunit of RNA polymerase II (POLR2A).</text>
</comment>
<comment type="subunit">
    <text evidence="3 4 5 8">Regulatory subunit of cyclin-dependent kinases. Identified in a complex with a kinase and the RNA polymerase II holoenzyme. Interacts with POLR2A. Interacts with CDK12 and CDK13. Interacts with CDK9 according to PubMed:10574912; does not interact with CDK9 according to PubMed:22012619.</text>
</comment>
<comment type="subunit">
    <text evidence="7">(Microbial infection) Interacts with human herpes virus 1 (HHV-1) transcriptional regulator ICP22.</text>
</comment>
<comment type="interaction">
    <interactant intactId="EBI-739806">
        <id>O75909</id>
    </interactant>
    <interactant intactId="EBI-930964">
        <id>P54253</id>
        <label>ATXN1</label>
    </interactant>
    <organismsDiffer>false</organismsDiffer>
    <experiments>2</experiments>
</comment>
<comment type="interaction">
    <interactant intactId="EBI-739806">
        <id>O75909</id>
    </interactant>
    <interactant intactId="EBI-711810">
        <id>O14503</id>
        <label>BHLHE40</label>
    </interactant>
    <organismsDiffer>false</organismsDiffer>
    <experiments>3</experiments>
</comment>
<comment type="interaction">
    <interactant intactId="EBI-739806">
        <id>O75909</id>
    </interactant>
    <interactant intactId="EBI-968626">
        <id>Q14004</id>
        <label>CDK13</label>
    </interactant>
    <organismsDiffer>false</organismsDiffer>
    <experiments>10</experiments>
</comment>
<comment type="interaction">
    <interactant intactId="EBI-739806">
        <id>O75909</id>
    </interactant>
    <interactant intactId="EBI-741037">
        <id>Q9BRK4</id>
        <label>LZTS2</label>
    </interactant>
    <organismsDiffer>false</organismsDiffer>
    <experiments>3</experiments>
</comment>
<comment type="interaction">
    <interactant intactId="EBI-739806">
        <id>O75909</id>
    </interactant>
    <interactant intactId="EBI-715849">
        <id>O14777</id>
        <label>NDC80</label>
    </interactant>
    <organismsDiffer>false</organismsDiffer>
    <experiments>3</experiments>
</comment>
<comment type="interaction">
    <interactant intactId="EBI-739806">
        <id>O75909</id>
    </interactant>
    <interactant intactId="EBI-740322">
        <id>Q93062</id>
        <label>RBPMS</label>
    </interactant>
    <organismsDiffer>false</organismsDiffer>
    <experiments>4</experiments>
</comment>
<comment type="interaction">
    <interactant intactId="EBI-739806">
        <id>O75909</id>
    </interactant>
    <interactant intactId="EBI-717810">
        <id>Q08117</id>
        <label>TLE5</label>
    </interactant>
    <organismsDiffer>false</organismsDiffer>
    <experiments>3</experiments>
</comment>
<comment type="interaction">
    <interactant intactId="EBI-12010594">
        <id>O75909-2</id>
    </interactant>
    <interactant intactId="EBI-930964">
        <id>P54253</id>
        <label>ATXN1</label>
    </interactant>
    <organismsDiffer>false</organismsDiffer>
    <experiments>6</experiments>
</comment>
<comment type="interaction">
    <interactant intactId="EBI-12010594">
        <id>O75909-2</id>
    </interactant>
    <interactant intactId="EBI-746238">
        <id>Q07002</id>
        <label>CDK18</label>
    </interactant>
    <organismsDiffer>false</organismsDiffer>
    <experiments>3</experiments>
</comment>
<comment type="interaction">
    <interactant intactId="EBI-12010594">
        <id>O75909-2</id>
    </interactant>
    <interactant intactId="EBI-3867333">
        <id>A8MQ03</id>
        <label>CYSRT1</label>
    </interactant>
    <organismsDiffer>false</organismsDiffer>
    <experiments>3</experiments>
</comment>
<comment type="interaction">
    <interactant intactId="EBI-12010594">
        <id>O75909-2</id>
    </interactant>
    <interactant intactId="EBI-742054">
        <id>Q96D03</id>
        <label>DDIT4L</label>
    </interactant>
    <organismsDiffer>false</organismsDiffer>
    <experiments>3</experiments>
</comment>
<comment type="interaction">
    <interactant intactId="EBI-12010594">
        <id>O75909-2</id>
    </interactant>
    <interactant intactId="EBI-12193763">
        <id>A1KXE4-2</id>
        <label>FAM168B</label>
    </interactant>
    <organismsDiffer>false</organismsDiffer>
    <experiments>3</experiments>
</comment>
<comment type="interaction">
    <interactant intactId="EBI-12010594">
        <id>O75909-2</id>
    </interactant>
    <interactant intactId="EBI-351590">
        <id>P31943</id>
        <label>HNRNPH1</label>
    </interactant>
    <organismsDiffer>false</organismsDiffer>
    <experiments>3</experiments>
</comment>
<comment type="interaction">
    <interactant intactId="EBI-12010594">
        <id>O75909-2</id>
    </interactant>
    <interactant intactId="EBI-352823">
        <id>P55795</id>
        <label>HNRNPH2</label>
    </interactant>
    <organismsDiffer>false</organismsDiffer>
    <experiments>3</experiments>
</comment>
<comment type="interaction">
    <interactant intactId="EBI-12010594">
        <id>O75909-2</id>
    </interactant>
    <interactant intactId="EBI-740785">
        <id>P49639</id>
        <label>HOXA1</label>
    </interactant>
    <organismsDiffer>false</organismsDiffer>
    <experiments>5</experiments>
</comment>
<comment type="interaction">
    <interactant intactId="EBI-12010594">
        <id>O75909-2</id>
    </interactant>
    <interactant intactId="EBI-3957665">
        <id>Q96LI6</id>
        <label>HSFY2</label>
    </interactant>
    <organismsDiffer>false</organismsDiffer>
    <experiments>3</experiments>
</comment>
<comment type="interaction">
    <interactant intactId="EBI-12010594">
        <id>O75909-2</id>
    </interactant>
    <interactant intactId="EBI-11953846">
        <id>Q52LG2</id>
        <label>KRTAP13-2</label>
    </interactant>
    <organismsDiffer>false</organismsDiffer>
    <experiments>3</experiments>
</comment>
<comment type="interaction">
    <interactant intactId="EBI-12010594">
        <id>O75909-2</id>
    </interactant>
    <interactant intactId="EBI-12805508">
        <id>Q3LI70</id>
        <label>KRTAP19-6</label>
    </interactant>
    <organismsDiffer>false</organismsDiffer>
    <experiments>3</experiments>
</comment>
<comment type="interaction">
    <interactant intactId="EBI-12010594">
        <id>O75909-2</id>
    </interactant>
    <interactant intactId="EBI-10241353">
        <id>Q3SYF9</id>
        <label>KRTAP19-7</label>
    </interactant>
    <organismsDiffer>false</organismsDiffer>
    <experiments>3</experiments>
</comment>
<comment type="interaction">
    <interactant intactId="EBI-12010594">
        <id>O75909-2</id>
    </interactant>
    <interactant intactId="EBI-11962084">
        <id>Q3LI66</id>
        <label>KRTAP6-2</label>
    </interactant>
    <organismsDiffer>false</organismsDiffer>
    <experiments>5</experiments>
</comment>
<comment type="interaction">
    <interactant intactId="EBI-12010594">
        <id>O75909-2</id>
    </interactant>
    <interactant intactId="EBI-10261141">
        <id>Q8IUC2</id>
        <label>KRTAP8-1</label>
    </interactant>
    <organismsDiffer>false</organismsDiffer>
    <experiments>3</experiments>
</comment>
<comment type="interaction">
    <interactant intactId="EBI-12010594">
        <id>O75909-2</id>
    </interactant>
    <interactant intactId="EBI-18936665">
        <id>P12524-2</id>
        <label>MYCL</label>
    </interactant>
    <organismsDiffer>false</organismsDiffer>
    <experiments>3</experiments>
</comment>
<comment type="interaction">
    <interactant intactId="EBI-12010594">
        <id>O75909-2</id>
    </interactant>
    <interactant intactId="EBI-12813389">
        <id>Q8TDS5</id>
        <label>OXER1</label>
    </interactant>
    <organismsDiffer>false</organismsDiffer>
    <experiments>3</experiments>
</comment>
<comment type="interaction">
    <interactant intactId="EBI-12010594">
        <id>O75909-2</id>
    </interactant>
    <interactant intactId="EBI-1055079">
        <id>O15160</id>
        <label>POLR1C</label>
    </interactant>
    <organismsDiffer>false</organismsDiffer>
    <experiments>3</experiments>
</comment>
<comment type="interaction">
    <interactant intactId="EBI-12010594">
        <id>O75909-2</id>
    </interactant>
    <interactant intactId="EBI-12029004">
        <id>P78424</id>
        <label>POU6F2</label>
    </interactant>
    <organismsDiffer>false</organismsDiffer>
    <experiments>3</experiments>
</comment>
<comment type="interaction">
    <interactant intactId="EBI-12010594">
        <id>O75909-2</id>
    </interactant>
    <interactant intactId="EBI-12754095">
        <id>P86480</id>
        <label>PRR20D</label>
    </interactant>
    <organismsDiffer>false</organismsDiffer>
    <experiments>3</experiments>
</comment>
<comment type="interaction">
    <interactant intactId="EBI-12010594">
        <id>O75909-2</id>
    </interactant>
    <interactant intactId="EBI-12001422">
        <id>Q01196-8</id>
        <label>RUNX1</label>
    </interactant>
    <organismsDiffer>false</organismsDiffer>
    <experiments>3</experiments>
</comment>
<comment type="interaction">
    <interactant intactId="EBI-12010594">
        <id>O75909-2</id>
    </interactant>
    <interactant intactId="EBI-11741437">
        <id>Q08117-2</id>
        <label>TLE5</label>
    </interactant>
    <organismsDiffer>false</organismsDiffer>
    <experiments>3</experiments>
</comment>
<comment type="interaction">
    <interactant intactId="EBI-12010594">
        <id>O75909-2</id>
    </interactant>
    <interactant intactId="EBI-11975223">
        <id>Q70EL1-9</id>
        <label>USP54</label>
    </interactant>
    <organismsDiffer>false</organismsDiffer>
    <experiments>3</experiments>
</comment>
<comment type="interaction">
    <interactant intactId="EBI-12010594">
        <id>O75909-2</id>
    </interactant>
    <interactant intactId="EBI-740232">
        <id>Q9NWS9-2</id>
        <label>ZNF446</label>
    </interactant>
    <organismsDiffer>false</organismsDiffer>
    <experiments>3</experiments>
</comment>
<comment type="subcellular location">
    <subcellularLocation>
        <location evidence="4">Nucleus</location>
    </subcellularLocation>
</comment>
<comment type="alternative products">
    <event type="alternative splicing"/>
    <isoform>
        <id>O75909-3</id>
        <name>1</name>
        <sequence type="displayed"/>
    </isoform>
    <isoform>
        <id>O75909-2</id>
        <name>2</name>
        <sequence type="described" ref="VSP_010830 VSP_035972"/>
    </isoform>
    <isoform>
        <id>O75909-1</id>
        <name>3</name>
        <sequence type="described" ref="VSP_035971 VSP_035973"/>
    </isoform>
    <isoform>
        <id>O75909-4</id>
        <name>4</name>
        <sequence type="described" ref="VSP_035970"/>
    </isoform>
</comment>
<comment type="tissue specificity">
    <text evidence="8">Widely expressed. Highest levels in testis.</text>
</comment>
<comment type="disease" evidence="6">
    <disease id="DI-05352">
        <name>Intellectual developmental disorder with hypertelorism and distinctive facies</name>
        <acronym>IDDHDF</acronym>
        <description>An autosomal dominant neurodevelopmental disorder characterized by developmental delay and intellectual disability, language defects, and distinctive facial dysmorphism including high hairline, hypertelorism, thin eyebrows, dysmorphic ears, broad nasal bridge and tip, and narrow jaw.</description>
        <dbReference type="MIM" id="618147"/>
    </disease>
    <text>The disease is caused by variants affecting the gene represented in this entry.</text>
</comment>
<comment type="similarity">
    <text evidence="14">Belongs to the cyclin family. Cyclin C subfamily.</text>
</comment>
<evidence type="ECO:0000250" key="1">
    <source>
        <dbReference type="UniProtKB" id="O88874"/>
    </source>
</evidence>
<evidence type="ECO:0000256" key="2">
    <source>
        <dbReference type="SAM" id="MobiDB-lite"/>
    </source>
</evidence>
<evidence type="ECO:0000269" key="3">
    <source>
    </source>
</evidence>
<evidence type="ECO:0000269" key="4">
    <source>
    </source>
</evidence>
<evidence type="ECO:0000269" key="5">
    <source>
    </source>
</evidence>
<evidence type="ECO:0000269" key="6">
    <source>
    </source>
</evidence>
<evidence type="ECO:0000269" key="7">
    <source>
    </source>
</evidence>
<evidence type="ECO:0000269" key="8">
    <source>
    </source>
</evidence>
<evidence type="ECO:0000303" key="9">
    <source>
    </source>
</evidence>
<evidence type="ECO:0000303" key="10">
    <source>
    </source>
</evidence>
<evidence type="ECO:0000303" key="11">
    <source ref="2"/>
</evidence>
<evidence type="ECO:0000303" key="12">
    <source ref="7"/>
</evidence>
<evidence type="ECO:0000303" key="13">
    <source ref="8"/>
</evidence>
<evidence type="ECO:0000305" key="14"/>
<evidence type="ECO:0007744" key="15">
    <source>
    </source>
</evidence>
<evidence type="ECO:0007744" key="16">
    <source>
    </source>
</evidence>
<evidence type="ECO:0007744" key="17">
    <source>
    </source>
</evidence>
<evidence type="ECO:0007744" key="18">
    <source>
    </source>
</evidence>
<evidence type="ECO:0007744" key="19">
    <source>
    </source>
</evidence>
<evidence type="ECO:0007744" key="20">
    <source>
    </source>
</evidence>
<evidence type="ECO:0007829" key="21">
    <source>
        <dbReference type="PDB" id="2I53"/>
    </source>
</evidence>
<protein>
    <recommendedName>
        <fullName>Cyclin-K</fullName>
    </recommendedName>
</protein>
<gene>
    <name type="primary">CCNK</name>
    <name type="synonym">CPR4</name>
</gene>
<sequence length="580" mass="64240">MKENKENSSPSVTSANLDHTKPCWYWDKKDLAHTPSQLEGLDPATEARYRREGARFIFDVGTRLGLHYDTLATGIIYFHRFYMFHSFKQFPRYVTGACCLFLAGKVEETPKKCKDIIKTARSLLNDVQFGQFGDDPKEEVMVLERILLQTIKFDLQVEHPYQFLLKYAKQLKGDKNKIQKLVQMAWTFVNDSLCTTLSLQWEPEIIAVAVMYLAGRLCKFEIQEWTSKPMYRRWWEQFVQDVPVDVLEDICHQILDLYSQGKQQMPHHTPHQLQQPPSLQPTPQVPQVQQSQPSQSSEPSQPQQKDPQQPAQQQQPAQQPKKPSPQPSSPRQVKRAVVVSPKEENKAAEPPPPKIPKIETTHPPLPPAHPPPDRKPPLAAALGEAEPPGPVDATDLPKVQIPPPAHPAPVHQPPPLPHRPPPPPPSSYMTGMSTTSSYMSGEGYQSLQSMMKTEGPSYGALPPAYGPPAHLPYHPHVYPPNPPPPPVPPPPASFPPPAIPPPTPGYPPPPPTYNPNFPPPPPRLPPTHAVPPHPPPGLGLPPASYPPPAVPPGGQPPVPPPIPPPGMPPVGGLGRAAWMR</sequence>
<name>CCNK_HUMAN</name>
<accession>O75909</accession>
<accession>Q59FT6</accession>
<accession>Q86U16</accession>
<accession>Q96B63</accession>
<accession>Q9NNY9</accession>
<feature type="chain" id="PRO_0000080478" description="Cyclin-K">
    <location>
        <begin position="1"/>
        <end position="580"/>
    </location>
</feature>
<feature type="region of interest" description="Disordered" evidence="2">
    <location>
        <begin position="262"/>
        <end position="580"/>
    </location>
</feature>
<feature type="compositionally biased region" description="Low complexity" evidence="2">
    <location>
        <begin position="263"/>
        <end position="277"/>
    </location>
</feature>
<feature type="compositionally biased region" description="Low complexity" evidence="2">
    <location>
        <begin position="285"/>
        <end position="321"/>
    </location>
</feature>
<feature type="compositionally biased region" description="Low complexity" evidence="2">
    <location>
        <begin position="377"/>
        <end position="386"/>
    </location>
</feature>
<feature type="compositionally biased region" description="Pro residues" evidence="2">
    <location>
        <begin position="400"/>
        <end position="426"/>
    </location>
</feature>
<feature type="compositionally biased region" description="Low complexity" evidence="2">
    <location>
        <begin position="427"/>
        <end position="444"/>
    </location>
</feature>
<feature type="compositionally biased region" description="Pro residues" evidence="2">
    <location>
        <begin position="477"/>
        <end position="568"/>
    </location>
</feature>
<feature type="modified residue" description="Phosphoserine" evidence="16 17 18 19">
    <location>
        <position position="324"/>
    </location>
</feature>
<feature type="modified residue" description="Phosphoserine" evidence="1">
    <location>
        <position position="328"/>
    </location>
</feature>
<feature type="modified residue" description="Phosphoserine" evidence="18">
    <location>
        <position position="329"/>
    </location>
</feature>
<feature type="modified residue" description="Phosphoserine" evidence="15 16 17 18 19 20">
    <location>
        <position position="340"/>
    </location>
</feature>
<feature type="splice variant" id="VSP_010830" description="In isoform 2." evidence="9 11">
    <original>QQPAQQQQPAQQPKKPSPQPSSPRQVKRAVVVSPKEENKAAEPPPPK</original>
    <variation>LILLQGWACRQPATHLLPSPLEDSLLCPRPFPHPACLQLGGWGGQPG</variation>
    <location>
        <begin position="308"/>
        <end position="354"/>
    </location>
</feature>
<feature type="splice variant" id="VSP_035970" description="In isoform 4." evidence="12 13">
    <original>V</original>
    <variation>VSGLKQALGRAGFPGGGNTQV</variation>
    <location>
        <position position="338"/>
    </location>
</feature>
<feature type="splice variant" id="VSP_035971" description="In isoform 3." evidence="10">
    <original>PPPKIPK</original>
    <variation>APSQHLW</variation>
    <location>
        <begin position="351"/>
        <end position="357"/>
    </location>
</feature>
<feature type="splice variant" id="VSP_035972" description="In isoform 2." evidence="9 11">
    <location>
        <begin position="355"/>
        <end position="580"/>
    </location>
</feature>
<feature type="splice variant" id="VSP_035973" description="In isoform 3." evidence="10">
    <location>
        <begin position="358"/>
        <end position="580"/>
    </location>
</feature>
<feature type="sequence variant" id="VAR_081570" description="In IDDHDF; contrary to the wild-type protein, does not rescue morpholino knockdown phenotype in zebrafish; dbSNP:rs1566748800." evidence="6">
    <original>K</original>
    <variation>E</variation>
    <location>
        <position position="111"/>
    </location>
</feature>
<feature type="sequence conflict" description="In Ref. 7; BAD92610." evidence="14" ref="7">
    <original>D</original>
    <variation>T</variation>
    <location>
        <position position="191"/>
    </location>
</feature>
<feature type="strand" evidence="21">
    <location>
        <begin position="21"/>
        <end position="23"/>
    </location>
</feature>
<feature type="helix" evidence="21">
    <location>
        <begin position="28"/>
        <end position="33"/>
    </location>
</feature>
<feature type="helix" evidence="21">
    <location>
        <begin position="35"/>
        <end position="38"/>
    </location>
</feature>
<feature type="helix" evidence="21">
    <location>
        <begin position="43"/>
        <end position="63"/>
    </location>
</feature>
<feature type="helix" evidence="21">
    <location>
        <begin position="68"/>
        <end position="81"/>
    </location>
</feature>
<feature type="turn" evidence="21">
    <location>
        <begin position="82"/>
        <end position="84"/>
    </location>
</feature>
<feature type="turn" evidence="21">
    <location>
        <begin position="87"/>
        <end position="89"/>
    </location>
</feature>
<feature type="helix" evidence="21">
    <location>
        <begin position="92"/>
        <end position="106"/>
    </location>
</feature>
<feature type="helix" evidence="21">
    <location>
        <begin position="113"/>
        <end position="123"/>
    </location>
</feature>
<feature type="helix" evidence="21">
    <location>
        <begin position="126"/>
        <end position="129"/>
    </location>
</feature>
<feature type="helix" evidence="21">
    <location>
        <begin position="130"/>
        <end position="132"/>
    </location>
</feature>
<feature type="helix" evidence="21">
    <location>
        <begin position="136"/>
        <end position="150"/>
    </location>
</feature>
<feature type="turn" evidence="21">
    <location>
        <begin position="151"/>
        <end position="153"/>
    </location>
</feature>
<feature type="helix" evidence="21">
    <location>
        <begin position="160"/>
        <end position="169"/>
    </location>
</feature>
<feature type="helix" evidence="21">
    <location>
        <begin position="175"/>
        <end position="192"/>
    </location>
</feature>
<feature type="turn" evidence="21">
    <location>
        <begin position="193"/>
        <end position="196"/>
    </location>
</feature>
<feature type="helix" evidence="21">
    <location>
        <begin position="197"/>
        <end position="199"/>
    </location>
</feature>
<feature type="helix" evidence="21">
    <location>
        <begin position="203"/>
        <end position="218"/>
    </location>
</feature>
<feature type="helix" evidence="21">
    <location>
        <begin position="222"/>
        <end position="225"/>
    </location>
</feature>
<feature type="strand" evidence="21">
    <location>
        <begin position="226"/>
        <end position="228"/>
    </location>
</feature>
<feature type="helix" evidence="21">
    <location>
        <begin position="234"/>
        <end position="237"/>
    </location>
</feature>
<feature type="strand" evidence="21">
    <location>
        <begin position="239"/>
        <end position="241"/>
    </location>
</feature>
<feature type="helix" evidence="21">
    <location>
        <begin position="244"/>
        <end position="255"/>
    </location>
</feature>
<feature type="turn" evidence="21">
    <location>
        <begin position="256"/>
        <end position="258"/>
    </location>
</feature>
<feature type="strand" evidence="21">
    <location>
        <begin position="259"/>
        <end position="261"/>
    </location>
</feature>
<organism>
    <name type="scientific">Homo sapiens</name>
    <name type="common">Human</name>
    <dbReference type="NCBI Taxonomy" id="9606"/>
    <lineage>
        <taxon>Eukaryota</taxon>
        <taxon>Metazoa</taxon>
        <taxon>Chordata</taxon>
        <taxon>Craniata</taxon>
        <taxon>Vertebrata</taxon>
        <taxon>Euteleostomi</taxon>
        <taxon>Mammalia</taxon>
        <taxon>Eutheria</taxon>
        <taxon>Euarchontoglires</taxon>
        <taxon>Primates</taxon>
        <taxon>Haplorrhini</taxon>
        <taxon>Catarrhini</taxon>
        <taxon>Hominidae</taxon>
        <taxon>Homo</taxon>
    </lineage>
</organism>
<dbReference type="EMBL" id="AF060515">
    <property type="protein sequence ID" value="AAD09978.1"/>
    <property type="molecule type" value="mRNA"/>
</dbReference>
<dbReference type="EMBL" id="BT006950">
    <property type="protein sequence ID" value="AAP35596.1"/>
    <property type="molecule type" value="mRNA"/>
</dbReference>
<dbReference type="EMBL" id="AF542236">
    <property type="protein sequence ID" value="AAN06829.1"/>
    <property type="molecule type" value="Genomic_DNA"/>
</dbReference>
<dbReference type="EMBL" id="AL110504">
    <property type="status" value="NOT_ANNOTATED_CDS"/>
    <property type="molecule type" value="Genomic_DNA"/>
</dbReference>
<dbReference type="EMBL" id="BC015935">
    <property type="protein sequence ID" value="AAH15935.1"/>
    <property type="molecule type" value="mRNA"/>
</dbReference>
<dbReference type="EMBL" id="AH009612">
    <property type="protein sequence ID" value="AAF82290.1"/>
    <property type="molecule type" value="Genomic_DNA"/>
</dbReference>
<dbReference type="EMBL" id="BX247958">
    <property type="protein sequence ID" value="CAD62298.1"/>
    <property type="molecule type" value="mRNA"/>
</dbReference>
<dbReference type="EMBL" id="AB209373">
    <property type="protein sequence ID" value="BAD92610.1"/>
    <property type="molecule type" value="Transcribed_RNA"/>
</dbReference>
<dbReference type="CCDS" id="CCDS45160.1">
    <molecule id="O75909-3"/>
</dbReference>
<dbReference type="RefSeq" id="NP_001092872.1">
    <molecule id="O75909-3"/>
    <property type="nucleotide sequence ID" value="NM_001099402.2"/>
</dbReference>
<dbReference type="RefSeq" id="XP_005268211.1">
    <molecule id="O75909-3"/>
    <property type="nucleotide sequence ID" value="XM_005268154.5"/>
</dbReference>
<dbReference type="RefSeq" id="XP_011535577.1">
    <property type="nucleotide sequence ID" value="XM_011537275.2"/>
</dbReference>
<dbReference type="RefSeq" id="XP_047287795.1">
    <molecule id="O75909-3"/>
    <property type="nucleotide sequence ID" value="XM_047431839.1"/>
</dbReference>
<dbReference type="RefSeq" id="XP_054232837.1">
    <molecule id="O75909-3"/>
    <property type="nucleotide sequence ID" value="XM_054376862.1"/>
</dbReference>
<dbReference type="RefSeq" id="XP_054232838.1">
    <molecule id="O75909-3"/>
    <property type="nucleotide sequence ID" value="XM_054376863.1"/>
</dbReference>
<dbReference type="PDB" id="2I53">
    <property type="method" value="X-ray"/>
    <property type="resolution" value="1.50 A"/>
    <property type="chains" value="A=11-267"/>
</dbReference>
<dbReference type="PDB" id="4CXA">
    <property type="method" value="X-ray"/>
    <property type="resolution" value="3.15 A"/>
    <property type="chains" value="B/D=11-267"/>
</dbReference>
<dbReference type="PDB" id="4NST">
    <property type="method" value="X-ray"/>
    <property type="resolution" value="2.20 A"/>
    <property type="chains" value="B/D=1-267"/>
</dbReference>
<dbReference type="PDB" id="4UN0">
    <property type="method" value="X-ray"/>
    <property type="resolution" value="3.15 A"/>
    <property type="chains" value="A/B=11-267"/>
</dbReference>
<dbReference type="PDB" id="5ACB">
    <property type="method" value="X-ray"/>
    <property type="resolution" value="2.70 A"/>
    <property type="chains" value="A/B=11-267"/>
</dbReference>
<dbReference type="PDB" id="5EFQ">
    <property type="method" value="X-ray"/>
    <property type="resolution" value="2.00 A"/>
    <property type="chains" value="B/D=1-267"/>
</dbReference>
<dbReference type="PDB" id="6B3E">
    <property type="method" value="X-ray"/>
    <property type="resolution" value="3.06 A"/>
    <property type="chains" value="B/D=1-267"/>
</dbReference>
<dbReference type="PDB" id="6CKX">
    <property type="method" value="X-ray"/>
    <property type="resolution" value="2.80 A"/>
    <property type="chains" value="B/D=1-267"/>
</dbReference>
<dbReference type="PDB" id="6TD3">
    <property type="method" value="X-ray"/>
    <property type="resolution" value="3.46 A"/>
    <property type="chains" value="C/F/I=1-267"/>
</dbReference>
<dbReference type="PDB" id="7NXJ">
    <property type="method" value="X-ray"/>
    <property type="resolution" value="2.36 A"/>
    <property type="chains" value="B/D=1-267"/>
</dbReference>
<dbReference type="PDB" id="7NXK">
    <property type="method" value="X-ray"/>
    <property type="resolution" value="3.00 A"/>
    <property type="chains" value="B/D=1-267"/>
</dbReference>
<dbReference type="PDB" id="8BU1">
    <property type="method" value="X-ray"/>
    <property type="resolution" value="2.98 A"/>
    <property type="chains" value="C/F/I=1-267"/>
</dbReference>
<dbReference type="PDB" id="8BU2">
    <property type="method" value="X-ray"/>
    <property type="resolution" value="3.13 A"/>
    <property type="chains" value="C/F/I=1-267"/>
</dbReference>
<dbReference type="PDB" id="8BU3">
    <property type="method" value="X-ray"/>
    <property type="resolution" value="3.42 A"/>
    <property type="chains" value="C/F/I=1-267"/>
</dbReference>
<dbReference type="PDB" id="8BU4">
    <property type="method" value="X-ray"/>
    <property type="resolution" value="3.09 A"/>
    <property type="chains" value="C/F/I=1-267"/>
</dbReference>
<dbReference type="PDB" id="8BU5">
    <property type="method" value="X-ray"/>
    <property type="resolution" value="3.13 A"/>
    <property type="chains" value="C/F/I=1-267"/>
</dbReference>
<dbReference type="PDB" id="8BU6">
    <property type="method" value="X-ray"/>
    <property type="resolution" value="3.45 A"/>
    <property type="chains" value="C/F/I=1-267"/>
</dbReference>
<dbReference type="PDB" id="8BU7">
    <property type="method" value="X-ray"/>
    <property type="resolution" value="3.25 A"/>
    <property type="chains" value="C/F/I=1-267"/>
</dbReference>
<dbReference type="PDB" id="8BU9">
    <property type="method" value="X-ray"/>
    <property type="resolution" value="3.51 A"/>
    <property type="chains" value="C/F/I=1-267"/>
</dbReference>
<dbReference type="PDB" id="8BUA">
    <property type="method" value="X-ray"/>
    <property type="resolution" value="3.19 A"/>
    <property type="chains" value="C/F/I=1-267"/>
</dbReference>
<dbReference type="PDB" id="8BUB">
    <property type="method" value="X-ray"/>
    <property type="resolution" value="3.42 A"/>
    <property type="chains" value="C/F/I=1-267"/>
</dbReference>
<dbReference type="PDB" id="8BUC">
    <property type="method" value="X-ray"/>
    <property type="resolution" value="3.85 A"/>
    <property type="chains" value="C/F/I=1-267"/>
</dbReference>
<dbReference type="PDB" id="8BUD">
    <property type="method" value="X-ray"/>
    <property type="resolution" value="3.20 A"/>
    <property type="chains" value="C/F/I=1-267"/>
</dbReference>
<dbReference type="PDB" id="8BUE">
    <property type="method" value="X-ray"/>
    <property type="resolution" value="3.25 A"/>
    <property type="chains" value="C/F/I=1-267"/>
</dbReference>
<dbReference type="PDB" id="8BUF">
    <property type="method" value="X-ray"/>
    <property type="resolution" value="3.30 A"/>
    <property type="chains" value="C/F/I=1-267"/>
</dbReference>
<dbReference type="PDB" id="8BUG">
    <property type="method" value="X-ray"/>
    <property type="resolution" value="3.53 A"/>
    <property type="chains" value="C/F/I=1-267"/>
</dbReference>
<dbReference type="PDB" id="8BUH">
    <property type="method" value="X-ray"/>
    <property type="resolution" value="3.79 A"/>
    <property type="chains" value="C/F/I=1-267"/>
</dbReference>
<dbReference type="PDB" id="8BUI">
    <property type="method" value="X-ray"/>
    <property type="resolution" value="3.50 A"/>
    <property type="chains" value="C/F/I=1-267"/>
</dbReference>
<dbReference type="PDB" id="8BUJ">
    <property type="method" value="X-ray"/>
    <property type="resolution" value="3.62 A"/>
    <property type="chains" value="C/F/I=1-267"/>
</dbReference>
<dbReference type="PDB" id="8BUK">
    <property type="method" value="X-ray"/>
    <property type="resolution" value="3.41 A"/>
    <property type="chains" value="C/F/I=1-267"/>
</dbReference>
<dbReference type="PDB" id="8BUL">
    <property type="method" value="X-ray"/>
    <property type="resolution" value="3.40 A"/>
    <property type="chains" value="C/F/I=1-267"/>
</dbReference>
<dbReference type="PDB" id="8BUM">
    <property type="method" value="X-ray"/>
    <property type="resolution" value="3.36 A"/>
    <property type="chains" value="C/F/I=1-267"/>
</dbReference>
<dbReference type="PDB" id="8BUN">
    <property type="method" value="X-ray"/>
    <property type="resolution" value="3.08 A"/>
    <property type="chains" value="C/F/I=1-267"/>
</dbReference>
<dbReference type="PDB" id="8BUO">
    <property type="method" value="X-ray"/>
    <property type="resolution" value="3.58 A"/>
    <property type="chains" value="C/F/I=1-267"/>
</dbReference>
<dbReference type="PDB" id="8BUP">
    <property type="method" value="X-ray"/>
    <property type="resolution" value="3.41 A"/>
    <property type="chains" value="C/F/I=1-267"/>
</dbReference>
<dbReference type="PDB" id="8BUQ">
    <property type="method" value="X-ray"/>
    <property type="resolution" value="3.20 A"/>
    <property type="chains" value="C/F/I=1-267"/>
</dbReference>
<dbReference type="PDB" id="8BUR">
    <property type="method" value="X-ray"/>
    <property type="resolution" value="3.64 A"/>
    <property type="chains" value="C/F/I=1-267"/>
</dbReference>
<dbReference type="PDB" id="8BUS">
    <property type="method" value="X-ray"/>
    <property type="resolution" value="3.26 A"/>
    <property type="chains" value="C/F/I=1-267"/>
</dbReference>
<dbReference type="PDB" id="8BUT">
    <property type="method" value="X-ray"/>
    <property type="resolution" value="3.25 A"/>
    <property type="chains" value="C/F/I=1-267"/>
</dbReference>
<dbReference type="PDB" id="8P81">
    <property type="method" value="X-ray"/>
    <property type="resolution" value="2.68 A"/>
    <property type="chains" value="B=1-267"/>
</dbReference>
<dbReference type="PDB" id="9FMR">
    <property type="method" value="X-ray"/>
    <property type="resolution" value="3.90 A"/>
    <property type="chains" value="C/F/I=1-267"/>
</dbReference>
<dbReference type="PDBsum" id="2I53"/>
<dbReference type="PDBsum" id="4CXA"/>
<dbReference type="PDBsum" id="4NST"/>
<dbReference type="PDBsum" id="4UN0"/>
<dbReference type="PDBsum" id="5ACB"/>
<dbReference type="PDBsum" id="5EFQ"/>
<dbReference type="PDBsum" id="6B3E"/>
<dbReference type="PDBsum" id="6CKX"/>
<dbReference type="PDBsum" id="6TD3"/>
<dbReference type="PDBsum" id="7NXJ"/>
<dbReference type="PDBsum" id="7NXK"/>
<dbReference type="PDBsum" id="8BU1"/>
<dbReference type="PDBsum" id="8BU2"/>
<dbReference type="PDBsum" id="8BU3"/>
<dbReference type="PDBsum" id="8BU4"/>
<dbReference type="PDBsum" id="8BU5"/>
<dbReference type="PDBsum" id="8BU6"/>
<dbReference type="PDBsum" id="8BU7"/>
<dbReference type="PDBsum" id="8BU9"/>
<dbReference type="PDBsum" id="8BUA"/>
<dbReference type="PDBsum" id="8BUB"/>
<dbReference type="PDBsum" id="8BUC"/>
<dbReference type="PDBsum" id="8BUD"/>
<dbReference type="PDBsum" id="8BUE"/>
<dbReference type="PDBsum" id="8BUF"/>
<dbReference type="PDBsum" id="8BUG"/>
<dbReference type="PDBsum" id="8BUH"/>
<dbReference type="PDBsum" id="8BUI"/>
<dbReference type="PDBsum" id="8BUJ"/>
<dbReference type="PDBsum" id="8BUK"/>
<dbReference type="PDBsum" id="8BUL"/>
<dbReference type="PDBsum" id="8BUM"/>
<dbReference type="PDBsum" id="8BUN"/>
<dbReference type="PDBsum" id="8BUO"/>
<dbReference type="PDBsum" id="8BUP"/>
<dbReference type="PDBsum" id="8BUQ"/>
<dbReference type="PDBsum" id="8BUR"/>
<dbReference type="PDBsum" id="8BUS"/>
<dbReference type="PDBsum" id="8BUT"/>
<dbReference type="PDBsum" id="8P81"/>
<dbReference type="PDBsum" id="9FMR"/>
<dbReference type="SMR" id="O75909"/>
<dbReference type="BioGRID" id="114339">
    <property type="interactions" value="132"/>
</dbReference>
<dbReference type="ComplexPortal" id="CPX-241">
    <property type="entry name" value="Cyclin K-CDK12 complex"/>
</dbReference>
<dbReference type="ComplexPortal" id="CPX-359">
    <property type="entry name" value="Cyclin K-CDK13 complex"/>
</dbReference>
<dbReference type="CORUM" id="O75909"/>
<dbReference type="DIP" id="DIP-50081N"/>
<dbReference type="FunCoup" id="O75909">
    <property type="interactions" value="1994"/>
</dbReference>
<dbReference type="IntAct" id="O75909">
    <property type="interactions" value="60"/>
</dbReference>
<dbReference type="MINT" id="O75909"/>
<dbReference type="STRING" id="9606.ENSP00000374529"/>
<dbReference type="BindingDB" id="O75909"/>
<dbReference type="ChEMBL" id="CHEMBL2346490"/>
<dbReference type="GlyCosmos" id="O75909">
    <property type="glycosylation" value="1 site, 2 glycans"/>
</dbReference>
<dbReference type="GlyGen" id="O75909">
    <property type="glycosylation" value="3 sites, 2 O-linked glycans (1 site)"/>
</dbReference>
<dbReference type="iPTMnet" id="O75909"/>
<dbReference type="PhosphoSitePlus" id="O75909"/>
<dbReference type="SwissPalm" id="O75909"/>
<dbReference type="BioMuta" id="CCNK"/>
<dbReference type="jPOST" id="O75909"/>
<dbReference type="MassIVE" id="O75909"/>
<dbReference type="PaxDb" id="9606-ENSP00000374529"/>
<dbReference type="PeptideAtlas" id="O75909"/>
<dbReference type="ProteomicsDB" id="50259">
    <molecule id="O75909-3"/>
</dbReference>
<dbReference type="ProteomicsDB" id="50260">
    <molecule id="O75909-1"/>
</dbReference>
<dbReference type="ProteomicsDB" id="50261">
    <molecule id="O75909-2"/>
</dbReference>
<dbReference type="ProteomicsDB" id="50262">
    <molecule id="O75909-4"/>
</dbReference>
<dbReference type="Pumba" id="O75909"/>
<dbReference type="Antibodypedia" id="102">
    <property type="antibodies" value="192 antibodies from 23 providers"/>
</dbReference>
<dbReference type="DNASU" id="8812"/>
<dbReference type="Ensembl" id="ENST00000389879.9">
    <molecule id="O75909-3"/>
    <property type="protein sequence ID" value="ENSP00000374529.5"/>
    <property type="gene ID" value="ENSG00000090061.17"/>
</dbReference>
<dbReference type="GeneID" id="8812"/>
<dbReference type="KEGG" id="hsa:8812"/>
<dbReference type="MANE-Select" id="ENST00000389879.9">
    <property type="protein sequence ID" value="ENSP00000374529.5"/>
    <property type="RefSeq nucleotide sequence ID" value="NM_001099402.2"/>
    <property type="RefSeq protein sequence ID" value="NP_001092872.1"/>
</dbReference>
<dbReference type="UCSC" id="uc001ygi.5">
    <molecule id="O75909-3"/>
    <property type="organism name" value="human"/>
</dbReference>
<dbReference type="AGR" id="HGNC:1596"/>
<dbReference type="CTD" id="8812"/>
<dbReference type="DisGeNET" id="8812"/>
<dbReference type="GeneCards" id="CCNK"/>
<dbReference type="HGNC" id="HGNC:1596">
    <property type="gene designation" value="CCNK"/>
</dbReference>
<dbReference type="HPA" id="ENSG00000090061">
    <property type="expression patterns" value="Tissue enhanced (bone)"/>
</dbReference>
<dbReference type="MalaCards" id="CCNK"/>
<dbReference type="MIM" id="603544">
    <property type="type" value="gene"/>
</dbReference>
<dbReference type="MIM" id="618147">
    <property type="type" value="phenotype"/>
</dbReference>
<dbReference type="neXtProt" id="NX_O75909"/>
<dbReference type="OpenTargets" id="ENSG00000090061"/>
<dbReference type="Orphanet" id="600668">
    <property type="disease" value="CCNK-related neurodevelopmental disorder-severe intellectual disability-facial dysmorphism syndrome"/>
</dbReference>
<dbReference type="PharmGKB" id="PA26161"/>
<dbReference type="VEuPathDB" id="HostDB:ENSG00000090061"/>
<dbReference type="eggNOG" id="KOG0834">
    <property type="taxonomic scope" value="Eukaryota"/>
</dbReference>
<dbReference type="GeneTree" id="ENSGT00940000156384"/>
<dbReference type="HOGENOM" id="CLU_022000_0_2_1"/>
<dbReference type="InParanoid" id="O75909"/>
<dbReference type="OMA" id="FVIACCR"/>
<dbReference type="OrthoDB" id="25002at2759"/>
<dbReference type="PAN-GO" id="O75909">
    <property type="GO annotations" value="5 GO annotations based on evolutionary models"/>
</dbReference>
<dbReference type="PhylomeDB" id="O75909"/>
<dbReference type="TreeFam" id="TF101010"/>
<dbReference type="PathwayCommons" id="O75909"/>
<dbReference type="Reactome" id="R-HSA-112382">
    <property type="pathway name" value="Formation of RNA Pol II elongation complex"/>
</dbReference>
<dbReference type="Reactome" id="R-HSA-167152">
    <property type="pathway name" value="Formation of HIV elongation complex in the absence of HIV Tat"/>
</dbReference>
<dbReference type="Reactome" id="R-HSA-167287">
    <property type="pathway name" value="HIV elongation arrest and recovery"/>
</dbReference>
<dbReference type="Reactome" id="R-HSA-167290">
    <property type="pathway name" value="Pausing and recovery of HIV elongation"/>
</dbReference>
<dbReference type="Reactome" id="R-HSA-2173796">
    <property type="pathway name" value="SMAD2/SMAD3:SMAD4 heterotrimer regulates transcription"/>
</dbReference>
<dbReference type="Reactome" id="R-HSA-674695">
    <property type="pathway name" value="RNA Polymerase II Pre-transcription Events"/>
</dbReference>
<dbReference type="Reactome" id="R-HSA-6796648">
    <property type="pathway name" value="TP53 Regulates Transcription of DNA Repair Genes"/>
</dbReference>
<dbReference type="Reactome" id="R-HSA-6807505">
    <property type="pathway name" value="RNA polymerase II transcribes snRNA genes"/>
</dbReference>
<dbReference type="Reactome" id="R-HSA-75955">
    <property type="pathway name" value="RNA Polymerase II Transcription Elongation"/>
</dbReference>
<dbReference type="SignaLink" id="O75909"/>
<dbReference type="SIGNOR" id="O75909"/>
<dbReference type="BioGRID-ORCS" id="8812">
    <property type="hits" value="775 hits in 1170 CRISPR screens"/>
</dbReference>
<dbReference type="ChiTaRS" id="CCNK">
    <property type="organism name" value="human"/>
</dbReference>
<dbReference type="EvolutionaryTrace" id="O75909"/>
<dbReference type="GeneWiki" id="Cyclin_K"/>
<dbReference type="GenomeRNAi" id="8812"/>
<dbReference type="Pharos" id="O75909">
    <property type="development level" value="Tbio"/>
</dbReference>
<dbReference type="PRO" id="PR:O75909"/>
<dbReference type="Proteomes" id="UP000005640">
    <property type="component" value="Chromosome 14"/>
</dbReference>
<dbReference type="RNAct" id="O75909">
    <property type="molecule type" value="protein"/>
</dbReference>
<dbReference type="Bgee" id="ENSG00000090061">
    <property type="expression patterns" value="Expressed in upper arm skin and 187 other cell types or tissues"/>
</dbReference>
<dbReference type="ExpressionAtlas" id="O75909">
    <property type="expression patterns" value="baseline and differential"/>
</dbReference>
<dbReference type="GO" id="GO:0002944">
    <property type="term" value="C:cyclin K-CDK12 complex"/>
    <property type="evidence" value="ECO:0000353"/>
    <property type="project" value="MGI"/>
</dbReference>
<dbReference type="GO" id="GO:0002945">
    <property type="term" value="C:cyclin K-CDK13 complex"/>
    <property type="evidence" value="ECO:0000353"/>
    <property type="project" value="MGI"/>
</dbReference>
<dbReference type="GO" id="GO:0008024">
    <property type="term" value="C:cyclin/CDK positive transcription elongation factor complex"/>
    <property type="evidence" value="ECO:0000318"/>
    <property type="project" value="GO_Central"/>
</dbReference>
<dbReference type="GO" id="GO:0005654">
    <property type="term" value="C:nucleoplasm"/>
    <property type="evidence" value="ECO:0000314"/>
    <property type="project" value="HPA"/>
</dbReference>
<dbReference type="GO" id="GO:0005634">
    <property type="term" value="C:nucleus"/>
    <property type="evidence" value="ECO:0000318"/>
    <property type="project" value="GO_Central"/>
</dbReference>
<dbReference type="GO" id="GO:0061575">
    <property type="term" value="F:cyclin-dependent protein serine/threonine kinase activator activity"/>
    <property type="evidence" value="ECO:0000318"/>
    <property type="project" value="GO_Central"/>
</dbReference>
<dbReference type="GO" id="GO:0004693">
    <property type="term" value="F:cyclin-dependent protein serine/threonine kinase activity"/>
    <property type="evidence" value="ECO:0000314"/>
    <property type="project" value="MGI"/>
</dbReference>
<dbReference type="GO" id="GO:0019901">
    <property type="term" value="F:protein kinase binding"/>
    <property type="evidence" value="ECO:0000353"/>
    <property type="project" value="MGI"/>
</dbReference>
<dbReference type="GO" id="GO:0008353">
    <property type="term" value="F:RNA polymerase II CTD heptapeptide repeat kinase activity"/>
    <property type="evidence" value="ECO:0000314"/>
    <property type="project" value="MGI"/>
</dbReference>
<dbReference type="GO" id="GO:0051301">
    <property type="term" value="P:cell division"/>
    <property type="evidence" value="ECO:0007669"/>
    <property type="project" value="UniProtKB-KW"/>
</dbReference>
<dbReference type="GO" id="GO:0006974">
    <property type="term" value="P:DNA damage response"/>
    <property type="evidence" value="ECO:0000315"/>
    <property type="project" value="MGI"/>
</dbReference>
<dbReference type="GO" id="GO:0044828">
    <property type="term" value="P:negative regulation by host of viral genome replication"/>
    <property type="evidence" value="ECO:0000314"/>
    <property type="project" value="CACAO"/>
</dbReference>
<dbReference type="GO" id="GO:0032786">
    <property type="term" value="P:positive regulation of DNA-templated transcription, elongation"/>
    <property type="evidence" value="ECO:0000318"/>
    <property type="project" value="GO_Central"/>
</dbReference>
<dbReference type="GO" id="GO:0045944">
    <property type="term" value="P:positive regulation of transcription by RNA polymerase II"/>
    <property type="evidence" value="ECO:0000318"/>
    <property type="project" value="GO_Central"/>
</dbReference>
<dbReference type="GO" id="GO:0032968">
    <property type="term" value="P:positive regulation of transcription elongation by RNA polymerase II"/>
    <property type="evidence" value="ECO:0000314"/>
    <property type="project" value="ComplexPortal"/>
</dbReference>
<dbReference type="GO" id="GO:0000079">
    <property type="term" value="P:regulation of cyclin-dependent protein serine/threonine kinase activity"/>
    <property type="evidence" value="ECO:0000304"/>
    <property type="project" value="ProtInc"/>
</dbReference>
<dbReference type="GO" id="GO:0009966">
    <property type="term" value="P:regulation of signal transduction"/>
    <property type="evidence" value="ECO:0000314"/>
    <property type="project" value="ComplexPortal"/>
</dbReference>
<dbReference type="GO" id="GO:0006366">
    <property type="term" value="P:transcription by RNA polymerase II"/>
    <property type="evidence" value="ECO:0000314"/>
    <property type="project" value="GO_Central"/>
</dbReference>
<dbReference type="CDD" id="cd20530">
    <property type="entry name" value="CYCLIN_CCNK_rpt1"/>
    <property type="match status" value="1"/>
</dbReference>
<dbReference type="CDD" id="cd20531">
    <property type="entry name" value="CYCLIN_CCNK_rpt2"/>
    <property type="match status" value="1"/>
</dbReference>
<dbReference type="FunFam" id="1.10.472.10:FF:000018">
    <property type="entry name" value="Cyclin-K (Predicted)"/>
    <property type="match status" value="1"/>
</dbReference>
<dbReference type="FunFam" id="1.10.472.10:FF:000021">
    <property type="entry name" value="Cyclin-K (Predicted)"/>
    <property type="match status" value="1"/>
</dbReference>
<dbReference type="Gene3D" id="1.10.472.10">
    <property type="entry name" value="Cyclin-like"/>
    <property type="match status" value="2"/>
</dbReference>
<dbReference type="IDEAL" id="IID00695"/>
<dbReference type="InterPro" id="IPR013763">
    <property type="entry name" value="Cyclin-like_dom"/>
</dbReference>
<dbReference type="InterPro" id="IPR036915">
    <property type="entry name" value="Cyclin-like_sf"/>
</dbReference>
<dbReference type="InterPro" id="IPR043198">
    <property type="entry name" value="Cyclin/Ssn8"/>
</dbReference>
<dbReference type="InterPro" id="IPR004367">
    <property type="entry name" value="Cyclin_C-dom"/>
</dbReference>
<dbReference type="InterPro" id="IPR006671">
    <property type="entry name" value="Cyclin_N"/>
</dbReference>
<dbReference type="PANTHER" id="PTHR10026">
    <property type="entry name" value="CYCLIN"/>
    <property type="match status" value="1"/>
</dbReference>
<dbReference type="Pfam" id="PF00134">
    <property type="entry name" value="Cyclin_N"/>
    <property type="match status" value="1"/>
</dbReference>
<dbReference type="Pfam" id="PF21797">
    <property type="entry name" value="CycT2-like_C"/>
    <property type="match status" value="1"/>
</dbReference>
<dbReference type="SMART" id="SM00385">
    <property type="entry name" value="CYCLIN"/>
    <property type="match status" value="2"/>
</dbReference>
<dbReference type="SMART" id="SM01332">
    <property type="entry name" value="Cyclin_C"/>
    <property type="match status" value="1"/>
</dbReference>
<dbReference type="SUPFAM" id="SSF47954">
    <property type="entry name" value="Cyclin-like"/>
    <property type="match status" value="2"/>
</dbReference>
<reference key="1">
    <citation type="journal article" date="1998" name="Mol. Cell. Biol.">
        <title>Human cyclin K, a novel RNA polymerase II-associated cyclin possessing both carboxy-terminal domain kinase and Cdk-activating kinase activity.</title>
        <authorList>
            <person name="Edwards M.C."/>
            <person name="Wong C."/>
            <person name="Elledge S.J."/>
        </authorList>
    </citation>
    <scope>NUCLEOTIDE SEQUENCE [MRNA] (ISOFORM 3)</scope>
    <scope>FUNCTION</scope>
    <scope>SUBUNIT</scope>
    <scope>TISSUE SPECIFICITY</scope>
</reference>
<reference key="2">
    <citation type="submission" date="2003-05" db="EMBL/GenBank/DDBJ databases">
        <title>Cloning of human full-length CDSs in BD Creator(TM) system donor vector.</title>
        <authorList>
            <person name="Kalnine N."/>
            <person name="Chen X."/>
            <person name="Rolfs A."/>
            <person name="Halleck A."/>
            <person name="Hines L."/>
            <person name="Eisenstein S."/>
            <person name="Koundinya M."/>
            <person name="Raphael J."/>
            <person name="Moreira D."/>
            <person name="Kelley T."/>
            <person name="LaBaer J."/>
            <person name="Lin Y."/>
            <person name="Phelan M."/>
            <person name="Farmer A."/>
        </authorList>
    </citation>
    <scope>NUCLEOTIDE SEQUENCE [LARGE SCALE MRNA] (ISOFORM 2)</scope>
</reference>
<reference key="3">
    <citation type="submission" date="2002-08" db="EMBL/GenBank/DDBJ databases">
        <authorList>
            <consortium name="NIEHS SNPs program"/>
        </authorList>
    </citation>
    <scope>NUCLEOTIDE SEQUENCE [GENOMIC DNA]</scope>
</reference>
<reference key="4">
    <citation type="journal article" date="2003" name="Nature">
        <title>The DNA sequence and analysis of human chromosome 14.</title>
        <authorList>
            <person name="Heilig R."/>
            <person name="Eckenberg R."/>
            <person name="Petit J.-L."/>
            <person name="Fonknechten N."/>
            <person name="Da Silva C."/>
            <person name="Cattolico L."/>
            <person name="Levy M."/>
            <person name="Barbe V."/>
            <person name="De Berardinis V."/>
            <person name="Ureta-Vidal A."/>
            <person name="Pelletier E."/>
            <person name="Vico V."/>
            <person name="Anthouard V."/>
            <person name="Rowen L."/>
            <person name="Madan A."/>
            <person name="Qin S."/>
            <person name="Sun H."/>
            <person name="Du H."/>
            <person name="Pepin K."/>
            <person name="Artiguenave F."/>
            <person name="Robert C."/>
            <person name="Cruaud C."/>
            <person name="Bruels T."/>
            <person name="Jaillon O."/>
            <person name="Friedlander L."/>
            <person name="Samson G."/>
            <person name="Brottier P."/>
            <person name="Cure S."/>
            <person name="Segurens B."/>
            <person name="Aniere F."/>
            <person name="Samain S."/>
            <person name="Crespeau H."/>
            <person name="Abbasi N."/>
            <person name="Aiach N."/>
            <person name="Boscus D."/>
            <person name="Dickhoff R."/>
            <person name="Dors M."/>
            <person name="Dubois I."/>
            <person name="Friedman C."/>
            <person name="Gouyvenoux M."/>
            <person name="James R."/>
            <person name="Madan A."/>
            <person name="Mairey-Estrada B."/>
            <person name="Mangenot S."/>
            <person name="Martins N."/>
            <person name="Menard M."/>
            <person name="Oztas S."/>
            <person name="Ratcliffe A."/>
            <person name="Shaffer T."/>
            <person name="Trask B."/>
            <person name="Vacherie B."/>
            <person name="Bellemere C."/>
            <person name="Belser C."/>
            <person name="Besnard-Gonnet M."/>
            <person name="Bartol-Mavel D."/>
            <person name="Boutard M."/>
            <person name="Briez-Silla S."/>
            <person name="Combette S."/>
            <person name="Dufosse-Laurent V."/>
            <person name="Ferron C."/>
            <person name="Lechaplais C."/>
            <person name="Louesse C."/>
            <person name="Muselet D."/>
            <person name="Magdelenat G."/>
            <person name="Pateau E."/>
            <person name="Petit E."/>
            <person name="Sirvain-Trukniewicz P."/>
            <person name="Trybou A."/>
            <person name="Vega-Czarny N."/>
            <person name="Bataille E."/>
            <person name="Bluet E."/>
            <person name="Bordelais I."/>
            <person name="Dubois M."/>
            <person name="Dumont C."/>
            <person name="Guerin T."/>
            <person name="Haffray S."/>
            <person name="Hammadi R."/>
            <person name="Muanga J."/>
            <person name="Pellouin V."/>
            <person name="Robert D."/>
            <person name="Wunderle E."/>
            <person name="Gauguet G."/>
            <person name="Roy A."/>
            <person name="Sainte-Marthe L."/>
            <person name="Verdier J."/>
            <person name="Verdier-Discala C."/>
            <person name="Hillier L.W."/>
            <person name="Fulton L."/>
            <person name="McPherson J."/>
            <person name="Matsuda F."/>
            <person name="Wilson R."/>
            <person name="Scarpelli C."/>
            <person name="Gyapay G."/>
            <person name="Wincker P."/>
            <person name="Saurin W."/>
            <person name="Quetier F."/>
            <person name="Waterston R."/>
            <person name="Hood L."/>
            <person name="Weissenbach J."/>
        </authorList>
    </citation>
    <scope>NUCLEOTIDE SEQUENCE [LARGE SCALE GENOMIC DNA]</scope>
</reference>
<reference key="5">
    <citation type="journal article" date="2004" name="Genome Res.">
        <title>The status, quality, and expansion of the NIH full-length cDNA project: the Mammalian Gene Collection (MGC).</title>
        <authorList>
            <consortium name="The MGC Project Team"/>
        </authorList>
    </citation>
    <scope>NUCLEOTIDE SEQUENCE [LARGE SCALE MRNA] (ISOFORM 2)</scope>
    <source>
        <tissue>Uterus</tissue>
    </source>
</reference>
<reference key="6">
    <citation type="submission" date="2000-05" db="EMBL/GenBank/DDBJ databases">
        <authorList>
            <person name="Elledge S."/>
            <person name="Gerber S."/>
            <person name="Rozet J."/>
            <person name="Perrault I."/>
            <person name="Ducroq D."/>
            <person name="Munnich A."/>
            <person name="Kaplan J."/>
        </authorList>
    </citation>
    <scope>NUCLEOTIDE SEQUENCE [GENOMIC DNA] OF 1-348 (ISOFORMS 1/3)</scope>
</reference>
<reference key="7">
    <citation type="submission" date="2005-03" db="EMBL/GenBank/DDBJ databases">
        <authorList>
            <person name="Totoki Y."/>
            <person name="Toyoda A."/>
            <person name="Takeda T."/>
            <person name="Sakaki Y."/>
            <person name="Tanaka A."/>
            <person name="Yokoyama S."/>
            <person name="Ohara O."/>
            <person name="Nagase T."/>
            <person name="Kikuno R.F."/>
        </authorList>
    </citation>
    <scope>NUCLEOTIDE SEQUENCE [LARGE SCALE MRNA] OF 191-580 (ISOFORM 4)</scope>
    <source>
        <tissue>Brain</tissue>
    </source>
</reference>
<reference key="8">
    <citation type="submission" date="2003-02" db="EMBL/GenBank/DDBJ databases">
        <title>Full-length cDNA libraries and normalization.</title>
        <authorList>
            <person name="Li W.B."/>
            <person name="Gruber C."/>
            <person name="Jessee J."/>
            <person name="Polayes D."/>
        </authorList>
    </citation>
    <scope>NUCLEOTIDE SEQUENCE [LARGE SCALE MRNA] OF 279-580 (ISOFORM 4)</scope>
    <source>
        <tissue>Neuroblastoma</tissue>
    </source>
</reference>
<reference key="9">
    <citation type="journal article" date="1999" name="J. Biol. Chem.">
        <title>Cyclin K functions as a CDK9 regulatory subunit and participates in RNA polymerase II transcription.</title>
        <authorList>
            <person name="Fu T.J."/>
            <person name="Peng J."/>
            <person name="Lee G."/>
            <person name="Price D.H."/>
            <person name="Flores O."/>
        </authorList>
    </citation>
    <scope>FUNCTION</scope>
    <scope>INTERACTION WITH CDK9</scope>
    <source>
        <tissue>T-cell</tissue>
    </source>
</reference>
<reference key="10">
    <citation type="journal article" date="2006" name="Cell">
        <title>Global, in vivo, and site-specific phosphorylation dynamics in signaling networks.</title>
        <authorList>
            <person name="Olsen J.V."/>
            <person name="Blagoev B."/>
            <person name="Gnad F."/>
            <person name="Macek B."/>
            <person name="Kumar C."/>
            <person name="Mortensen P."/>
            <person name="Mann M."/>
        </authorList>
    </citation>
    <scope>PHOSPHORYLATION [LARGE SCALE ANALYSIS] AT SER-340</scope>
    <scope>IDENTIFICATION BY MASS SPECTROMETRY [LARGE SCALE ANALYSIS]</scope>
    <source>
        <tissue>Cervix carcinoma</tissue>
    </source>
</reference>
<reference key="11">
    <citation type="journal article" date="2008" name="Mol. Cell">
        <title>Kinase-selective enrichment enables quantitative phosphoproteomics of the kinome across the cell cycle.</title>
        <authorList>
            <person name="Daub H."/>
            <person name="Olsen J.V."/>
            <person name="Bairlein M."/>
            <person name="Gnad F."/>
            <person name="Oppermann F.S."/>
            <person name="Korner R."/>
            <person name="Greff Z."/>
            <person name="Keri G."/>
            <person name="Stemmann O."/>
            <person name="Mann M."/>
        </authorList>
    </citation>
    <scope>PHOSPHORYLATION [LARGE SCALE ANALYSIS] AT SER-324 AND SER-340</scope>
    <scope>IDENTIFICATION BY MASS SPECTROMETRY [LARGE SCALE ANALYSIS]</scope>
    <source>
        <tissue>Cervix carcinoma</tissue>
    </source>
</reference>
<reference key="12">
    <citation type="journal article" date="2008" name="Proc. Natl. Acad. Sci. U.S.A.">
        <title>A quantitative atlas of mitotic phosphorylation.</title>
        <authorList>
            <person name="Dephoure N."/>
            <person name="Zhou C."/>
            <person name="Villen J."/>
            <person name="Beausoleil S.A."/>
            <person name="Bakalarski C.E."/>
            <person name="Elledge S.J."/>
            <person name="Gygi S.P."/>
        </authorList>
    </citation>
    <scope>IDENTIFICATION BY MASS SPECTROMETRY [LARGE SCALE ANALYSIS]</scope>
    <source>
        <tissue>Cervix carcinoma</tissue>
    </source>
</reference>
<reference key="13">
    <citation type="journal article" date="2009" name="Mol. Cell. Proteomics">
        <title>Large-scale proteomics analysis of the human kinome.</title>
        <authorList>
            <person name="Oppermann F.S."/>
            <person name="Gnad F."/>
            <person name="Olsen J.V."/>
            <person name="Hornberger R."/>
            <person name="Greff Z."/>
            <person name="Keri G."/>
            <person name="Mann M."/>
            <person name="Daub H."/>
        </authorList>
    </citation>
    <scope>PHOSPHORYLATION [LARGE SCALE ANALYSIS] AT SER-324 AND SER-340</scope>
    <scope>IDENTIFICATION BY MASS SPECTROMETRY [LARGE SCALE ANALYSIS]</scope>
</reference>
<reference key="14">
    <citation type="journal article" date="2010" name="Sci. Signal.">
        <title>Quantitative phosphoproteomics reveals widespread full phosphorylation site occupancy during mitosis.</title>
        <authorList>
            <person name="Olsen J.V."/>
            <person name="Vermeulen M."/>
            <person name="Santamaria A."/>
            <person name="Kumar C."/>
            <person name="Miller M.L."/>
            <person name="Jensen L.J."/>
            <person name="Gnad F."/>
            <person name="Cox J."/>
            <person name="Jensen T.S."/>
            <person name="Nigg E.A."/>
            <person name="Brunak S."/>
            <person name="Mann M."/>
        </authorList>
    </citation>
    <scope>PHOSPHORYLATION [LARGE SCALE ANALYSIS] AT SER-324; SER-329 AND SER-340</scope>
    <scope>IDENTIFICATION BY MASS SPECTROMETRY [LARGE SCALE ANALYSIS]</scope>
    <source>
        <tissue>Cervix carcinoma</tissue>
    </source>
</reference>
<reference key="15">
    <citation type="journal article" date="2011" name="BMC Syst. Biol.">
        <title>Initial characterization of the human central proteome.</title>
        <authorList>
            <person name="Burkard T.R."/>
            <person name="Planyavsky M."/>
            <person name="Kaupe I."/>
            <person name="Breitwieser F.P."/>
            <person name="Buerckstuemmer T."/>
            <person name="Bennett K.L."/>
            <person name="Superti-Furga G."/>
            <person name="Colinge J."/>
        </authorList>
    </citation>
    <scope>IDENTIFICATION BY MASS SPECTROMETRY [LARGE SCALE ANALYSIS]</scope>
</reference>
<reference key="16">
    <citation type="journal article" date="2011" name="Genes Dev.">
        <title>The Cyclin K/Cdk12 complex maintains genomic stability via regulation of expression of DNA damage response genes.</title>
        <authorList>
            <person name="Blazek D."/>
            <person name="Kohoutek J."/>
            <person name="Bartholomeeusen K."/>
            <person name="Johansen E."/>
            <person name="Hulinkova P."/>
            <person name="Luo Z."/>
            <person name="Cimermancic P."/>
            <person name="Ule J."/>
            <person name="Peterlin B.M."/>
        </authorList>
    </citation>
    <scope>FUNCTION</scope>
    <scope>SUBUNIT</scope>
    <scope>SUBCELLULAR LOCATION</scope>
</reference>
<reference key="17">
    <citation type="journal article" date="2011" name="Sci. Signal.">
        <title>System-wide temporal characterization of the proteome and phosphoproteome of human embryonic stem cell differentiation.</title>
        <authorList>
            <person name="Rigbolt K.T."/>
            <person name="Prokhorova T.A."/>
            <person name="Akimov V."/>
            <person name="Henningsen J."/>
            <person name="Johansen P.T."/>
            <person name="Kratchmarova I."/>
            <person name="Kassem M."/>
            <person name="Mann M."/>
            <person name="Olsen J.V."/>
            <person name="Blagoev B."/>
        </authorList>
    </citation>
    <scope>PHOSPHORYLATION [LARGE SCALE ANALYSIS] AT SER-324 AND SER-340</scope>
    <scope>IDENTIFICATION BY MASS SPECTROMETRY [LARGE SCALE ANALYSIS]</scope>
</reference>
<reference key="18">
    <citation type="journal article" date="2013" name="J. Proteome Res.">
        <title>Toward a comprehensive characterization of a human cancer cell phosphoproteome.</title>
        <authorList>
            <person name="Zhou H."/>
            <person name="Di Palma S."/>
            <person name="Preisinger C."/>
            <person name="Peng M."/>
            <person name="Polat A.N."/>
            <person name="Heck A.J."/>
            <person name="Mohammed S."/>
        </authorList>
    </citation>
    <scope>PHOSPHORYLATION [LARGE SCALE ANALYSIS] AT SER-340</scope>
    <scope>IDENTIFICATION BY MASS SPECTROMETRY [LARGE SCALE ANALYSIS]</scope>
    <source>
        <tissue>Cervix carcinoma</tissue>
        <tissue>Erythroleukemia</tissue>
    </source>
</reference>
<reference key="19">
    <citation type="journal article" date="2014" name="J. Proteomics">
        <title>An enzyme assisted RP-RPLC approach for in-depth analysis of human liver phosphoproteome.</title>
        <authorList>
            <person name="Bian Y."/>
            <person name="Song C."/>
            <person name="Cheng K."/>
            <person name="Dong M."/>
            <person name="Wang F."/>
            <person name="Huang J."/>
            <person name="Sun D."/>
            <person name="Wang L."/>
            <person name="Ye M."/>
            <person name="Zou H."/>
        </authorList>
    </citation>
    <scope>IDENTIFICATION BY MASS SPECTROMETRY [LARGE SCALE ANALYSIS]</scope>
    <source>
        <tissue>Liver</tissue>
    </source>
</reference>
<reference key="20">
    <citation type="journal article" date="2018" name="Am. J. Hum. Genet.">
        <title>De novo mutations of CCNK cause a syndromic neurodevelopmental disorder with distinctive facial dysmorphism.</title>
        <authorList>
            <person name="Fan Y."/>
            <person name="Yin W."/>
            <person name="Hu B."/>
            <person name="Kline A.D."/>
            <person name="Zhang V.W."/>
            <person name="Liang D."/>
            <person name="Sun Y."/>
            <person name="Wang L."/>
            <person name="Tang S."/>
            <person name="Powis Z."/>
            <person name="Li L."/>
            <person name="Yan H."/>
            <person name="Shi Z."/>
            <person name="Yang X."/>
            <person name="Chen Y."/>
            <person name="Wang J."/>
            <person name="Jiang Y."/>
            <person name="Tan H."/>
            <person name="Gu X."/>
            <person name="Wu L."/>
            <person name="Yu Y."/>
        </authorList>
    </citation>
    <scope>INVOLVEMENT IN IDDHDF</scope>
    <scope>VARIANT IDDHDF GLU-111</scope>
    <scope>CHARACTERIZATION OF VARIANT IDDHDF GLU-111</scope>
</reference>
<reference key="21">
    <citation type="journal article" date="2021" name="Vaccines (Basel)">
        <title>HSV-1 ICP22 Is a Selective Viral Repressor of Cellular RNA Polymerase II-Mediated Transcription Elongation.</title>
        <authorList>
            <person name="Isa N.F."/>
            <person name="Bensaude O."/>
            <person name="Aziz N.C."/>
            <person name="Murphy S."/>
        </authorList>
    </citation>
    <scope>INTERACTION WITH HHV-1 TRANSCRIPTIONAL REGULATOR ICP22 (MICROBIAL INFECTION)</scope>
</reference>
<reference key="22">
    <citation type="journal article" date="2007" name="J. Mol. Biol.">
        <title>Crystal structure of human cyclin K, a positive regulator of cyclin-dependent kinase 9.</title>
        <authorList>
            <person name="Baek K."/>
            <person name="Brown R.S."/>
            <person name="Birrane G."/>
            <person name="Ladias J.A."/>
        </authorList>
    </citation>
    <scope>X-RAY CRYSTALLOGRAPHY (1.5 ANGSTROMS) OF 11-267</scope>
</reference>
<reference key="23">
    <citation type="journal article" date="2014" name="Nat. Commun.">
        <title>The structure and substrate specificity of human Cdk12/Cyclin K.</title>
        <authorList>
            <person name="Boesken C.A."/>
            <person name="Farnung L."/>
            <person name="Hintermair C."/>
            <person name="Merzel Schachter M."/>
            <person name="Vogel-Bachmayr K."/>
            <person name="Blazek D."/>
            <person name="Anand K."/>
            <person name="Fisher R.P."/>
            <person name="Eick D."/>
            <person name="Geyer M."/>
        </authorList>
    </citation>
    <scope>X-RAY CRYSTALLOGRAPHY (2.20 ANGSTROMS) OF 1-267 IN COMPLEX WITH CDK12</scope>
    <scope>INTERACTION WITH CDK12</scope>
</reference>